<sequence length="332" mass="36771">MKTLGEFIVEKQHEFSQATGELTALLSAIKLGAKIIHRDINKAGLVDILGASGAENAQGEVQQKLDLFANEKLKAALKARDIVAGIASEEEDEIVVFEGCEHAKYVVLMDPLDGSSNIDVNVSVGTIFSIYRRVTPVGTPVTEEDFLQPGNKQVAAGYVVYGSSTMLVYTTGCGVHAFTYDPSLGVFCLCQERMRFPEKGKTYSINEGNYIKFPNGVKKYIKFCQEEDSSTSRPYTSRYIGSLVADFHRNLLKGGIYLYPSTASHPKGKLRLLYECNPMAFLAEQAGGKASDGKERILDIIPESLHQRRSFFVGNRHMVDDVERFIREYPDA</sequence>
<evidence type="ECO:0000255" key="1">
    <source>
        <dbReference type="HAMAP-Rule" id="MF_01855"/>
    </source>
</evidence>
<reference key="1">
    <citation type="journal article" date="2008" name="Genome Res.">
        <title>Comparative genome analysis of Salmonella enteritidis PT4 and Salmonella gallinarum 287/91 provides insights into evolutionary and host adaptation pathways.</title>
        <authorList>
            <person name="Thomson N.R."/>
            <person name="Clayton D.J."/>
            <person name="Windhorst D."/>
            <person name="Vernikos G."/>
            <person name="Davidson S."/>
            <person name="Churcher C."/>
            <person name="Quail M.A."/>
            <person name="Stevens M."/>
            <person name="Jones M.A."/>
            <person name="Watson M."/>
            <person name="Barron A."/>
            <person name="Layton A."/>
            <person name="Pickard D."/>
            <person name="Kingsley R.A."/>
            <person name="Bignell A."/>
            <person name="Clark L."/>
            <person name="Harris B."/>
            <person name="Ormond D."/>
            <person name="Abdellah Z."/>
            <person name="Brooks K."/>
            <person name="Cherevach I."/>
            <person name="Chillingworth T."/>
            <person name="Woodward J."/>
            <person name="Norberczak H."/>
            <person name="Lord A."/>
            <person name="Arrowsmith C."/>
            <person name="Jagels K."/>
            <person name="Moule S."/>
            <person name="Mungall K."/>
            <person name="Saunders M."/>
            <person name="Whitehead S."/>
            <person name="Chabalgoity J.A."/>
            <person name="Maskell D."/>
            <person name="Humphreys T."/>
            <person name="Roberts M."/>
            <person name="Barrow P.A."/>
            <person name="Dougan G."/>
            <person name="Parkhill J."/>
        </authorList>
    </citation>
    <scope>NUCLEOTIDE SEQUENCE [LARGE SCALE GENOMIC DNA]</scope>
    <source>
        <strain>287/91 / NCTC 13346</strain>
    </source>
</reference>
<protein>
    <recommendedName>
        <fullName evidence="1">Fructose-1,6-bisphosphatase class 1</fullName>
        <shortName evidence="1">FBPase class 1</shortName>
        <ecNumber evidence="1">3.1.3.11</ecNumber>
    </recommendedName>
    <alternativeName>
        <fullName evidence="1">D-fructose-1,6-bisphosphate 1-phosphohydrolase class 1</fullName>
    </alternativeName>
</protein>
<accession>B5R9H4</accession>
<dbReference type="EC" id="3.1.3.11" evidence="1"/>
<dbReference type="EMBL" id="AM933173">
    <property type="protein sequence ID" value="CAR40022.1"/>
    <property type="molecule type" value="Genomic_DNA"/>
</dbReference>
<dbReference type="RefSeq" id="WP_000853762.1">
    <property type="nucleotide sequence ID" value="NC_011274.1"/>
</dbReference>
<dbReference type="SMR" id="B5R9H4"/>
<dbReference type="KEGG" id="seg:SG4260"/>
<dbReference type="HOGENOM" id="CLU_039977_2_2_6"/>
<dbReference type="UniPathway" id="UPA00138"/>
<dbReference type="Proteomes" id="UP000008321">
    <property type="component" value="Chromosome"/>
</dbReference>
<dbReference type="GO" id="GO:0005829">
    <property type="term" value="C:cytosol"/>
    <property type="evidence" value="ECO:0007669"/>
    <property type="project" value="TreeGrafter"/>
</dbReference>
<dbReference type="GO" id="GO:0042132">
    <property type="term" value="F:fructose 1,6-bisphosphate 1-phosphatase activity"/>
    <property type="evidence" value="ECO:0007669"/>
    <property type="project" value="UniProtKB-UniRule"/>
</dbReference>
<dbReference type="GO" id="GO:0000287">
    <property type="term" value="F:magnesium ion binding"/>
    <property type="evidence" value="ECO:0007669"/>
    <property type="project" value="UniProtKB-UniRule"/>
</dbReference>
<dbReference type="GO" id="GO:0030388">
    <property type="term" value="P:fructose 1,6-bisphosphate metabolic process"/>
    <property type="evidence" value="ECO:0007669"/>
    <property type="project" value="TreeGrafter"/>
</dbReference>
<dbReference type="GO" id="GO:0006002">
    <property type="term" value="P:fructose 6-phosphate metabolic process"/>
    <property type="evidence" value="ECO:0007669"/>
    <property type="project" value="TreeGrafter"/>
</dbReference>
<dbReference type="GO" id="GO:0006000">
    <property type="term" value="P:fructose metabolic process"/>
    <property type="evidence" value="ECO:0007669"/>
    <property type="project" value="TreeGrafter"/>
</dbReference>
<dbReference type="GO" id="GO:0006094">
    <property type="term" value="P:gluconeogenesis"/>
    <property type="evidence" value="ECO:0007669"/>
    <property type="project" value="UniProtKB-UniRule"/>
</dbReference>
<dbReference type="GO" id="GO:0005986">
    <property type="term" value="P:sucrose biosynthetic process"/>
    <property type="evidence" value="ECO:0007669"/>
    <property type="project" value="TreeGrafter"/>
</dbReference>
<dbReference type="CDD" id="cd00354">
    <property type="entry name" value="FBPase"/>
    <property type="match status" value="1"/>
</dbReference>
<dbReference type="FunFam" id="3.30.540.10:FF:000002">
    <property type="entry name" value="Fructose-1,6-bisphosphatase class 1"/>
    <property type="match status" value="1"/>
</dbReference>
<dbReference type="FunFam" id="3.40.190.80:FF:000001">
    <property type="entry name" value="Fructose-1,6-bisphosphatase class 1"/>
    <property type="match status" value="1"/>
</dbReference>
<dbReference type="Gene3D" id="3.40.190.80">
    <property type="match status" value="1"/>
</dbReference>
<dbReference type="Gene3D" id="3.30.540.10">
    <property type="entry name" value="Fructose-1,6-Bisphosphatase, subunit A, domain 1"/>
    <property type="match status" value="1"/>
</dbReference>
<dbReference type="HAMAP" id="MF_01855">
    <property type="entry name" value="FBPase_class1"/>
    <property type="match status" value="1"/>
</dbReference>
<dbReference type="InterPro" id="IPR044015">
    <property type="entry name" value="FBPase_C_dom"/>
</dbReference>
<dbReference type="InterPro" id="IPR000146">
    <property type="entry name" value="FBPase_class-1"/>
</dbReference>
<dbReference type="InterPro" id="IPR033391">
    <property type="entry name" value="FBPase_N"/>
</dbReference>
<dbReference type="InterPro" id="IPR028343">
    <property type="entry name" value="FBPtase"/>
</dbReference>
<dbReference type="InterPro" id="IPR020548">
    <property type="entry name" value="Fructose_bisphosphatase_AS"/>
</dbReference>
<dbReference type="NCBIfam" id="NF006778">
    <property type="entry name" value="PRK09293.1-1"/>
    <property type="match status" value="1"/>
</dbReference>
<dbReference type="NCBIfam" id="NF006779">
    <property type="entry name" value="PRK09293.1-3"/>
    <property type="match status" value="1"/>
</dbReference>
<dbReference type="PANTHER" id="PTHR11556">
    <property type="entry name" value="FRUCTOSE-1,6-BISPHOSPHATASE-RELATED"/>
    <property type="match status" value="1"/>
</dbReference>
<dbReference type="PANTHER" id="PTHR11556:SF35">
    <property type="entry name" value="SEDOHEPTULOSE-1,7-BISPHOSPHATASE, CHLOROPLASTIC"/>
    <property type="match status" value="1"/>
</dbReference>
<dbReference type="Pfam" id="PF00316">
    <property type="entry name" value="FBPase"/>
    <property type="match status" value="1"/>
</dbReference>
<dbReference type="Pfam" id="PF18913">
    <property type="entry name" value="FBPase_C"/>
    <property type="match status" value="1"/>
</dbReference>
<dbReference type="PIRSF" id="PIRSF500210">
    <property type="entry name" value="FBPtase"/>
    <property type="match status" value="1"/>
</dbReference>
<dbReference type="PIRSF" id="PIRSF000904">
    <property type="entry name" value="FBPtase_SBPase"/>
    <property type="match status" value="1"/>
</dbReference>
<dbReference type="PRINTS" id="PR00115">
    <property type="entry name" value="F16BPHPHTASE"/>
</dbReference>
<dbReference type="SUPFAM" id="SSF56655">
    <property type="entry name" value="Carbohydrate phosphatase"/>
    <property type="match status" value="1"/>
</dbReference>
<dbReference type="PROSITE" id="PS00124">
    <property type="entry name" value="FBPASE"/>
    <property type="match status" value="1"/>
</dbReference>
<organism>
    <name type="scientific">Salmonella gallinarum (strain 287/91 / NCTC 13346)</name>
    <dbReference type="NCBI Taxonomy" id="550538"/>
    <lineage>
        <taxon>Bacteria</taxon>
        <taxon>Pseudomonadati</taxon>
        <taxon>Pseudomonadota</taxon>
        <taxon>Gammaproteobacteria</taxon>
        <taxon>Enterobacterales</taxon>
        <taxon>Enterobacteriaceae</taxon>
        <taxon>Salmonella</taxon>
    </lineage>
</organism>
<keyword id="KW-0119">Carbohydrate metabolism</keyword>
<keyword id="KW-0963">Cytoplasm</keyword>
<keyword id="KW-0378">Hydrolase</keyword>
<keyword id="KW-0460">Magnesium</keyword>
<keyword id="KW-0479">Metal-binding</keyword>
<proteinExistence type="inferred from homology"/>
<feature type="chain" id="PRO_0000364689" description="Fructose-1,6-bisphosphatase class 1">
    <location>
        <begin position="1"/>
        <end position="332"/>
    </location>
</feature>
<feature type="binding site" evidence="1">
    <location>
        <position position="89"/>
    </location>
    <ligand>
        <name>Mg(2+)</name>
        <dbReference type="ChEBI" id="CHEBI:18420"/>
        <label>1</label>
    </ligand>
</feature>
<feature type="binding site" evidence="1">
    <location>
        <position position="110"/>
    </location>
    <ligand>
        <name>Mg(2+)</name>
        <dbReference type="ChEBI" id="CHEBI:18420"/>
        <label>1</label>
    </ligand>
</feature>
<feature type="binding site" evidence="1">
    <location>
        <position position="110"/>
    </location>
    <ligand>
        <name>Mg(2+)</name>
        <dbReference type="ChEBI" id="CHEBI:18420"/>
        <label>2</label>
    </ligand>
</feature>
<feature type="binding site" evidence="1">
    <location>
        <position position="112"/>
    </location>
    <ligand>
        <name>Mg(2+)</name>
        <dbReference type="ChEBI" id="CHEBI:18420"/>
        <label>1</label>
    </ligand>
</feature>
<feature type="binding site" evidence="1">
    <location>
        <begin position="113"/>
        <end position="116"/>
    </location>
    <ligand>
        <name>substrate</name>
    </ligand>
</feature>
<feature type="binding site" evidence="1">
    <location>
        <position position="113"/>
    </location>
    <ligand>
        <name>Mg(2+)</name>
        <dbReference type="ChEBI" id="CHEBI:18420"/>
        <label>2</label>
    </ligand>
</feature>
<feature type="binding site" evidence="1">
    <location>
        <position position="206"/>
    </location>
    <ligand>
        <name>substrate</name>
    </ligand>
</feature>
<feature type="binding site" evidence="1">
    <location>
        <position position="239"/>
    </location>
    <ligand>
        <name>substrate</name>
    </ligand>
</feature>
<feature type="binding site" evidence="1">
    <location>
        <begin position="257"/>
        <end position="259"/>
    </location>
    <ligand>
        <name>substrate</name>
    </ligand>
</feature>
<feature type="binding site" evidence="1">
    <location>
        <position position="269"/>
    </location>
    <ligand>
        <name>substrate</name>
    </ligand>
</feature>
<feature type="binding site" evidence="1">
    <location>
        <position position="275"/>
    </location>
    <ligand>
        <name>Mg(2+)</name>
        <dbReference type="ChEBI" id="CHEBI:18420"/>
        <label>2</label>
    </ligand>
</feature>
<gene>
    <name evidence="1" type="primary">fbp</name>
    <name type="ordered locus">SG4260</name>
</gene>
<name>F16PA_SALG2</name>
<comment type="catalytic activity">
    <reaction evidence="1">
        <text>beta-D-fructose 1,6-bisphosphate + H2O = beta-D-fructose 6-phosphate + phosphate</text>
        <dbReference type="Rhea" id="RHEA:11064"/>
        <dbReference type="ChEBI" id="CHEBI:15377"/>
        <dbReference type="ChEBI" id="CHEBI:32966"/>
        <dbReference type="ChEBI" id="CHEBI:43474"/>
        <dbReference type="ChEBI" id="CHEBI:57634"/>
        <dbReference type="EC" id="3.1.3.11"/>
    </reaction>
</comment>
<comment type="cofactor">
    <cofactor evidence="1">
        <name>Mg(2+)</name>
        <dbReference type="ChEBI" id="CHEBI:18420"/>
    </cofactor>
    <text evidence="1">Binds 2 magnesium ions per subunit.</text>
</comment>
<comment type="pathway">
    <text evidence="1">Carbohydrate biosynthesis; gluconeogenesis.</text>
</comment>
<comment type="subunit">
    <text evidence="1">Homotetramer.</text>
</comment>
<comment type="subcellular location">
    <subcellularLocation>
        <location evidence="1">Cytoplasm</location>
    </subcellularLocation>
</comment>
<comment type="similarity">
    <text evidence="1">Belongs to the FBPase class 1 family.</text>
</comment>